<reference key="1">
    <citation type="journal article" date="1997" name="Eur. J. Biochem.">
        <title>Molecular cloning, sequence analysis and functional characterization of the gene kdsA, encoding 3-deoxy-D-manno-2-octulosonate-8-phosphate synthase of Chlamydia psittaci 6BC.</title>
        <authorList>
            <person name="Brabetz W."/>
            <person name="Brade H."/>
        </authorList>
    </citation>
    <scope>NUCLEOTIDE SEQUENCE [GENOMIC DNA]</scope>
    <source>
        <strain>ATCC VR-125 / 6BC</strain>
    </source>
</reference>
<reference key="2">
    <citation type="journal article" date="2011" name="J. Bacteriol.">
        <title>Full-length de novo sequence of the Chlamydophila psittaci type strain, 6BC.</title>
        <authorList>
            <person name="Voigt A."/>
            <person name="Schofl G."/>
            <person name="Heidrich A."/>
            <person name="Sachse K."/>
            <person name="Saluz H.P."/>
        </authorList>
    </citation>
    <scope>NUCLEOTIDE SEQUENCE [LARGE SCALE GENOMIC DNA]</scope>
    <source>
        <strain>ATCC VR-125 / 6BC</strain>
    </source>
</reference>
<reference key="3">
    <citation type="journal article" date="2011" name="J. Bacteriol.">
        <title>Genome sequences of the zoonotic pathogens Chlamydia psittaci 6BC and Cal10.</title>
        <authorList>
            <person name="Grinblat-Huse V."/>
            <person name="Drabek E.F."/>
            <person name="Creasy H.H."/>
            <person name="Daugherty S.C."/>
            <person name="Jones K.M."/>
            <person name="Santana-Cruz I."/>
            <person name="Tallon L.J."/>
            <person name="Read T.D."/>
            <person name="Hatch T.P."/>
            <person name="Bavoil P."/>
            <person name="Myers G.S."/>
        </authorList>
    </citation>
    <scope>NUCLEOTIDE SEQUENCE [LARGE SCALE GENOMIC DNA]</scope>
    <source>
        <strain>ATCC VR-125 / 6BC</strain>
    </source>
</reference>
<organism>
    <name type="scientific">Chlamydophila psittaci (strain ATCC VR-125 / 6BC)</name>
    <name type="common">Chlamydia psittaci</name>
    <dbReference type="NCBI Taxonomy" id="331636"/>
    <lineage>
        <taxon>Bacteria</taxon>
        <taxon>Pseudomonadati</taxon>
        <taxon>Chlamydiota</taxon>
        <taxon>Chlamydiia</taxon>
        <taxon>Chlamydiales</taxon>
        <taxon>Chlamydiaceae</taxon>
        <taxon>Chlamydia/Chlamydophila group</taxon>
        <taxon>Chlamydia</taxon>
    </lineage>
</organism>
<feature type="chain" id="PRO_0000187118" description="2-dehydro-3-deoxyphosphooctonate aldolase">
    <location>
        <begin position="1"/>
        <end position="269"/>
    </location>
</feature>
<gene>
    <name type="primary">kdsA</name>
    <name type="ordered locus">CPSIT_0024</name>
    <name type="ordered locus">G5O_0030</name>
</gene>
<proteinExistence type="inferred from homology"/>
<protein>
    <recommendedName>
        <fullName>2-dehydro-3-deoxyphosphooctonate aldolase</fullName>
        <ecNumber>2.5.1.55</ecNumber>
    </recommendedName>
    <alternativeName>
        <fullName>3-deoxy-D-manno-octulosonic acid 8-phosphate synthase</fullName>
    </alternativeName>
    <alternativeName>
        <fullName>KDO-8-phosphate synthase</fullName>
        <shortName>KDO 8-P synthase</shortName>
        <shortName>KDOPS</shortName>
    </alternativeName>
    <alternativeName>
        <fullName>Phospho-2-dehydro-3-deoxyoctonate aldolase</fullName>
    </alternativeName>
</protein>
<name>KDSA_CHLP6</name>
<keyword id="KW-0963">Cytoplasm</keyword>
<keyword id="KW-0448">Lipopolysaccharide biosynthesis</keyword>
<keyword id="KW-0808">Transferase</keyword>
<sequence>MFSDKMILIAGPCVIEEEETTLEIASKIQEIVAPYTDHIHWIFKSSYDKANRSSINSYRGPGLQEGLRILSKVKQTFGVEILTDVHSPEEARAAAEVCDILQIPAFLCRQTDLLVAAAETHAVINIKKGQFLSPWDMQGPVDKVLSTGNSKIILTERGCSFGYNNLVSDMRSIAVLSKMGFPVVFDGTHSVQLPGGLKTHSGGQTEFIPTLTRAALAAGAHGLFIETHMNPAIAKSDAASMLSLKTFEALLPIWNQLYQCVRSFEMAAV</sequence>
<evidence type="ECO:0000305" key="1"/>
<comment type="catalytic activity">
    <reaction>
        <text>D-arabinose 5-phosphate + phosphoenolpyruvate + H2O = 3-deoxy-alpha-D-manno-2-octulosonate-8-phosphate + phosphate</text>
        <dbReference type="Rhea" id="RHEA:14053"/>
        <dbReference type="ChEBI" id="CHEBI:15377"/>
        <dbReference type="ChEBI" id="CHEBI:43474"/>
        <dbReference type="ChEBI" id="CHEBI:57693"/>
        <dbReference type="ChEBI" id="CHEBI:58702"/>
        <dbReference type="ChEBI" id="CHEBI:85985"/>
        <dbReference type="EC" id="2.5.1.55"/>
    </reaction>
</comment>
<comment type="pathway">
    <text>Carbohydrate biosynthesis; 3-deoxy-D-manno-octulosonate biosynthesis; 3-deoxy-D-manno-octulosonate from D-ribulose 5-phosphate: step 2/3.</text>
</comment>
<comment type="pathway">
    <text>Bacterial outer membrane biogenesis; lipopolysaccharide biosynthesis.</text>
</comment>
<comment type="subcellular location">
    <subcellularLocation>
        <location>Cytoplasm</location>
    </subcellularLocation>
</comment>
<comment type="similarity">
    <text evidence="1">Belongs to the KdsA family.</text>
</comment>
<dbReference type="EC" id="2.5.1.55"/>
<dbReference type="EMBL" id="Z50747">
    <property type="protein sequence ID" value="CAA90622.1"/>
    <property type="molecule type" value="Genomic_DNA"/>
</dbReference>
<dbReference type="EMBL" id="CP002549">
    <property type="protein sequence ID" value="ADZ18169.1"/>
    <property type="molecule type" value="Genomic_DNA"/>
</dbReference>
<dbReference type="EMBL" id="CP002586">
    <property type="protein sequence ID" value="AEB55044.1"/>
    <property type="molecule type" value="Genomic_DNA"/>
</dbReference>
<dbReference type="RefSeq" id="WP_006342696.1">
    <property type="nucleotide sequence ID" value="NC_017287.1"/>
</dbReference>
<dbReference type="SMR" id="Q46225"/>
<dbReference type="GeneID" id="12242289"/>
<dbReference type="KEGG" id="chb:G5O_0030"/>
<dbReference type="KEGG" id="chp:CPSIT_0024"/>
<dbReference type="PATRIC" id="fig|331636.3.peg.23"/>
<dbReference type="HOGENOM" id="CLU_036666_0_0_0"/>
<dbReference type="BRENDA" id="2.5.1.55">
    <property type="organism ID" value="1312"/>
</dbReference>
<dbReference type="UniPathway" id="UPA00030"/>
<dbReference type="UniPathway" id="UPA00357">
    <property type="reaction ID" value="UER00474"/>
</dbReference>
<dbReference type="GO" id="GO:0005737">
    <property type="term" value="C:cytoplasm"/>
    <property type="evidence" value="ECO:0007669"/>
    <property type="project" value="UniProtKB-SubCell"/>
</dbReference>
<dbReference type="GO" id="GO:0008676">
    <property type="term" value="F:3-deoxy-8-phosphooctulonate synthase activity"/>
    <property type="evidence" value="ECO:0007669"/>
    <property type="project" value="UniProtKB-UniRule"/>
</dbReference>
<dbReference type="GO" id="GO:0019294">
    <property type="term" value="P:keto-3-deoxy-D-manno-octulosonic acid biosynthetic process"/>
    <property type="evidence" value="ECO:0007669"/>
    <property type="project" value="UniProtKB-UniRule"/>
</dbReference>
<dbReference type="Gene3D" id="3.20.20.70">
    <property type="entry name" value="Aldolase class I"/>
    <property type="match status" value="1"/>
</dbReference>
<dbReference type="HAMAP" id="MF_00056">
    <property type="entry name" value="KDO8P_synth"/>
    <property type="match status" value="1"/>
</dbReference>
<dbReference type="InterPro" id="IPR013785">
    <property type="entry name" value="Aldolase_TIM"/>
</dbReference>
<dbReference type="InterPro" id="IPR006218">
    <property type="entry name" value="DAHP1/KDSA"/>
</dbReference>
<dbReference type="InterPro" id="IPR006269">
    <property type="entry name" value="KDO8P_synthase"/>
</dbReference>
<dbReference type="NCBIfam" id="TIGR01362">
    <property type="entry name" value="KDO8P_synth"/>
    <property type="match status" value="1"/>
</dbReference>
<dbReference type="NCBIfam" id="NF003543">
    <property type="entry name" value="PRK05198.1"/>
    <property type="match status" value="1"/>
</dbReference>
<dbReference type="PANTHER" id="PTHR21057">
    <property type="entry name" value="PHOSPHO-2-DEHYDRO-3-DEOXYHEPTONATE ALDOLASE"/>
    <property type="match status" value="1"/>
</dbReference>
<dbReference type="Pfam" id="PF00793">
    <property type="entry name" value="DAHP_synth_1"/>
    <property type="match status" value="1"/>
</dbReference>
<dbReference type="SUPFAM" id="SSF51569">
    <property type="entry name" value="Aldolase"/>
    <property type="match status" value="1"/>
</dbReference>
<accession>Q46225</accession>
<accession>F0T5I5</accession>